<gene>
    <name evidence="1" type="primary">L3</name>
</gene>
<comment type="function">
    <text evidence="1">Major capsid protein that self-associates to form 240 hexon trimers, each in the shape of a hexagon, building most of the pseudo T=25 capsid. Assembled into trimeric units with the help of the chaperone shutoff protein. Transported by pre-protein VI to the nucleus where it associates with other structural proteins to form an empty capsid. Might be involved, through its interaction with host dyneins, in the intracellular microtubule-dependent transport of incoming viral capsid to the nucleus.</text>
</comment>
<comment type="subunit">
    <text evidence="1">Homotrimer. Interacts with the capsid vertex protein; this interaction binds the peripentonal hexons to the neighboring penton base. Interacts with the hexon-linking protein; this interaction tethers the hexons surrounding the penton to those situated in the central plate of the facet. Interacts with the hexon-interlacing protein; this interaction lashes the hexons together. Interacts with host dyneins DYNC1LI1 and DYNC1I2; this interaction might be involved in intracellular microtubule-dependent transport of incoming viral capsid. Interacts with the shutoff protein; this interaction allows folding and formation of hexons trimers. Interacts with pre-protein VI; this interaction probably allows nuclear import of hexon trimers and possibly pre-capsid assembly.</text>
</comment>
<comment type="subcellular location">
    <subcellularLocation>
        <location evidence="1">Virion</location>
    </subcellularLocation>
    <subcellularLocation>
        <location evidence="1">Host nucleus</location>
    </subcellularLocation>
    <text evidence="1">Forms the capsid icosahedric shell. Present in 720 copies per virion, assembled in 240 trimers.</text>
</comment>
<comment type="induction">
    <text evidence="1">Expressed in the late phase of the viral replicative cycle.</text>
</comment>
<comment type="miscellaneous">
    <text evidence="1">All late proteins expressed from the major late promoter are produced by alternative splicing and alternative polyadenylation of the same gene giving rise to non-overlapping ORFs. A leader sequence is present in the N-terminus of all these mRNAs and is recognized by the viral shutoff protein to provide expression although conventional translation via ribosome scanning from the cap has been shut off in the host cell.</text>
</comment>
<comment type="similarity">
    <text evidence="1 2">Belongs to the adenoviridae hexon protein family.</text>
</comment>
<organismHost>
    <name type="scientific">Pantherophis guttatus</name>
    <name type="common">Corn snake</name>
    <name type="synonym">Elaphe guttata</name>
    <dbReference type="NCBI Taxonomy" id="94885"/>
</organismHost>
<dbReference type="EMBL" id="DQ106414">
    <property type="protein sequence ID" value="AAL92452.1"/>
    <property type="molecule type" value="Genomic_DNA"/>
</dbReference>
<dbReference type="RefSeq" id="YP_001552255.1">
    <property type="nucleotide sequence ID" value="NC_009989.1"/>
</dbReference>
<dbReference type="SMR" id="Q8JN67"/>
<dbReference type="KEGG" id="vg:10973869"/>
<dbReference type="OrthoDB" id="198at10239"/>
<dbReference type="Proteomes" id="UP000136605">
    <property type="component" value="Genome"/>
</dbReference>
<dbReference type="GO" id="GO:0043657">
    <property type="term" value="C:host cell"/>
    <property type="evidence" value="ECO:0007669"/>
    <property type="project" value="GOC"/>
</dbReference>
<dbReference type="GO" id="GO:0042025">
    <property type="term" value="C:host cell nucleus"/>
    <property type="evidence" value="ECO:0007669"/>
    <property type="project" value="UniProtKB-SubCell"/>
</dbReference>
<dbReference type="GO" id="GO:0039623">
    <property type="term" value="C:T=25 icosahedral viral capsid"/>
    <property type="evidence" value="ECO:0007669"/>
    <property type="project" value="UniProtKB-UniRule"/>
</dbReference>
<dbReference type="GO" id="GO:0005198">
    <property type="term" value="F:structural molecule activity"/>
    <property type="evidence" value="ECO:0007669"/>
    <property type="project" value="UniProtKB-UniRule"/>
</dbReference>
<dbReference type="GO" id="GO:0075521">
    <property type="term" value="P:microtubule-dependent intracellular transport of viral material towards nucleus"/>
    <property type="evidence" value="ECO:0007669"/>
    <property type="project" value="UniProtKB-UniRule"/>
</dbReference>
<dbReference type="GO" id="GO:0046718">
    <property type="term" value="P:symbiont entry into host cell"/>
    <property type="evidence" value="ECO:0007669"/>
    <property type="project" value="UniProtKB-UniRule"/>
</dbReference>
<dbReference type="Gene3D" id="2.70.9.10">
    <property type="entry name" value="Adenovirus Type 2 Hexon, domain 4"/>
    <property type="match status" value="2"/>
</dbReference>
<dbReference type="Gene3D" id="3.90.39.10">
    <property type="entry name" value="Hexon Major Viral Coat Protein, domain 2"/>
    <property type="match status" value="1"/>
</dbReference>
<dbReference type="Gene3D" id="3.90.249.10">
    <property type="entry name" value="Hexon Major Viral Coat Protein, domain 3"/>
    <property type="match status" value="2"/>
</dbReference>
<dbReference type="HAMAP" id="MF_04051">
    <property type="entry name" value="ADV_CAPSH"/>
    <property type="match status" value="1"/>
</dbReference>
<dbReference type="InterPro" id="IPR016108">
    <property type="entry name" value="Adenovirus_Pll_hexon_C"/>
</dbReference>
<dbReference type="InterPro" id="IPR016107">
    <property type="entry name" value="Adenovirus_Pll_hexon_N"/>
</dbReference>
<dbReference type="InterPro" id="IPR044942">
    <property type="entry name" value="Adenovirus_Pll_hexon_sub2"/>
</dbReference>
<dbReference type="InterPro" id="IPR016110">
    <property type="entry name" value="Adenovirus_Pll_hexon_sub3"/>
</dbReference>
<dbReference type="InterPro" id="IPR037542">
    <property type="entry name" value="ADV_hexon"/>
</dbReference>
<dbReference type="InterPro" id="IPR016112">
    <property type="entry name" value="VP_dsDNA_II"/>
</dbReference>
<dbReference type="Pfam" id="PF01065">
    <property type="entry name" value="Adeno_hexon"/>
    <property type="match status" value="1"/>
</dbReference>
<dbReference type="Pfam" id="PF03678">
    <property type="entry name" value="Adeno_hexon_C"/>
    <property type="match status" value="1"/>
</dbReference>
<dbReference type="SUPFAM" id="SSF49749">
    <property type="entry name" value="Group II dsDNA viruses VP"/>
    <property type="match status" value="2"/>
</dbReference>
<accession>Q8JN67</accession>
<name>CAPSH_ADES1</name>
<sequence length="909" mass="101939">MEPQREFFHIAGRSAKEYLSENLVQFIQATQNYFNIGEKFRDPYVAPSAGVTTDRSQKLQLRVVPMQIEDNANYYKARFTLNVGDNRLVDLGSSYFDIKGTLDRGPSFKPYGGTAYNPLAPKSAPVNSPFIVGNDTHVVAQLPQTYAAANTGVTEAIQQQVSNVQPNPQDGLPNYSGPEVVDATTKAGLGRVVAEESEGQQFPCLRAYAAPQTAAGDVSTAPIEKTYVNTTNVAGRVSGTMATDVIDWQNPDAHFVDYVDDGRSTSAGNRPNYIGFRDNFIGIMYYNSGSNTGSLSSQTQQLNVVLDLNDRNSELSYQYMLADLTSRWHYFALWNQAVDSYDRHVRIIENDGYEEGPPNLSFPIQGIQNPFSPSSVGTEMTVNTANQTAAATANTVAHIGYGNIPAVEMNLPANLRRTFLYANVAMYLPDTYKFTPPNIDLPANHLSYGYMNGRLPLPNIIDTWTDIGARWSLDVMDTVNPFNHHRNTGLKYRSQLLGNGRHCNFHIQVPQKFFAIKNLLLLPGTYNYEWYFRKDPNMVLQSTLGNDLREDGAQITYNQVNLYVSFFPMNYDTQSELELMLRNATNDQNFSDYLGAVNNLYQIPAGSNTVVVNIPDRSWGAFRGWSFTRLKVTETPRIGATQDPNFEYSGTIPYLDGTFYLSHTFQRCSIQWDSSVPWPGNDRLLVPNWFEIKDPPNQDPEGYNTMQSNLTKDFFFTQMAASYNQGYQGFSYPSCTKHYGFINNFEPMSRQVPVYDATHPNLMAAYLNNPATMPIWNNCGFQQKTSTNALLERCGHAYVANWPFPLTGRDALPNQTTEKKFLVDNYLWQIPFSSNFLNMGTLTDLGQNVMYANSSHSLNMQFTVDPMNEPTYLLLLFGVFDQVVVNQPTRSGISVAYLRLPFASGSAAT</sequence>
<keyword id="KW-0167">Capsid protein</keyword>
<keyword id="KW-1176">Cytoplasmic inwards viral transport</keyword>
<keyword id="KW-1048">Host nucleus</keyword>
<keyword id="KW-0945">Host-virus interaction</keyword>
<keyword id="KW-0426">Late protein</keyword>
<keyword id="KW-1177">Microtubular inwards viral transport</keyword>
<keyword id="KW-0597">Phosphoprotein</keyword>
<keyword id="KW-1185">Reference proteome</keyword>
<keyword id="KW-1148">T=25 icosahedral capsid protein</keyword>
<keyword id="KW-0946">Virion</keyword>
<keyword id="KW-1160">Virus entry into host cell</keyword>
<feature type="chain" id="PRO_0000221833" description="Hexon protein" evidence="1">
    <location>
        <begin position="1"/>
        <end position="909"/>
    </location>
</feature>
<feature type="site" description="Involved in interaction with pre-protein VI" evidence="1">
    <location>
        <position position="726"/>
    </location>
</feature>
<feature type="modified residue" description="Phosphotyrosine; by host" evidence="1">
    <location>
        <position position="897"/>
    </location>
</feature>
<reference key="1">
    <citation type="journal article" date="2002" name="J. Gen. Virol.">
        <title>Genetic analysis of an adenovirus isolated from corn snake (Elaphe guttata) implies common origin with the members of the proposed new genus Atadenovirus.</title>
        <authorList>
            <person name="Farkas S.L."/>
            <person name="Benko M."/>
            <person name="Elo P.T."/>
            <person name="Ursu K."/>
            <person name="Dan A."/>
            <person name="Ahne W."/>
            <person name="Harrach B."/>
        </authorList>
    </citation>
    <scope>NUCLEOTIDE SEQUENCE [GENOMIC DNA]</scope>
</reference>
<organism>
    <name type="scientific">Snake adenovirus serotype 1</name>
    <name type="common">SnAdV-1</name>
    <dbReference type="NCBI Taxonomy" id="189830"/>
    <lineage>
        <taxon>Viruses</taxon>
        <taxon>Varidnaviria</taxon>
        <taxon>Bamfordvirae</taxon>
        <taxon>Preplasmiviricota</taxon>
        <taxon>Tectiliviricetes</taxon>
        <taxon>Rowavirales</taxon>
        <taxon>Adenoviridae</taxon>
        <taxon>Atadenovirus</taxon>
        <taxon>Snake atadenovirus A</taxon>
    </lineage>
</organism>
<evidence type="ECO:0000255" key="1">
    <source>
        <dbReference type="HAMAP-Rule" id="MF_04051"/>
    </source>
</evidence>
<evidence type="ECO:0000305" key="2"/>
<proteinExistence type="inferred from homology"/>
<protein>
    <recommendedName>
        <fullName evidence="1">Hexon protein</fullName>
        <shortName evidence="1">CP-H</shortName>
    </recommendedName>
    <alternativeName>
        <fullName evidence="1">Protein II</fullName>
    </alternativeName>
</protein>